<evidence type="ECO:0000250" key="1"/>
<evidence type="ECO:0000250" key="2">
    <source>
        <dbReference type="UniProtKB" id="P05496"/>
    </source>
</evidence>
<evidence type="ECO:0000255" key="3"/>
<evidence type="ECO:0000269" key="4">
    <source>
    </source>
</evidence>
<evidence type="ECO:0000269" key="5">
    <source>
    </source>
</evidence>
<evidence type="ECO:0000305" key="6"/>
<evidence type="ECO:0000312" key="7">
    <source>
        <dbReference type="RGD" id="61933"/>
    </source>
</evidence>
<accession>Q06645</accession>
<dbReference type="EMBL" id="D13123">
    <property type="protein sequence ID" value="BAA02425.1"/>
    <property type="molecule type" value="mRNA"/>
</dbReference>
<dbReference type="PIR" id="JS0740">
    <property type="entry name" value="JS0740"/>
</dbReference>
<dbReference type="RefSeq" id="NP_059007.1">
    <property type="nucleotide sequence ID" value="NM_017311.1"/>
</dbReference>
<dbReference type="RefSeq" id="XP_006247250.1">
    <property type="nucleotide sequence ID" value="XM_006247188.5"/>
</dbReference>
<dbReference type="RefSeq" id="XP_006247251.1">
    <property type="nucleotide sequence ID" value="XM_006247189.3"/>
</dbReference>
<dbReference type="SMR" id="Q06645"/>
<dbReference type="CORUM" id="Q06645"/>
<dbReference type="FunCoup" id="Q06645">
    <property type="interactions" value="1148"/>
</dbReference>
<dbReference type="STRING" id="10116.ENSRNOP00000009815"/>
<dbReference type="PhosphoSitePlus" id="Q06645"/>
<dbReference type="jPOST" id="Q06645"/>
<dbReference type="PaxDb" id="10116-ENSRNOP00000009815"/>
<dbReference type="GeneID" id="29754"/>
<dbReference type="KEGG" id="rno:29754"/>
<dbReference type="UCSC" id="RGD:61933">
    <property type="organism name" value="rat"/>
</dbReference>
<dbReference type="AGR" id="RGD:61933"/>
<dbReference type="CTD" id="516"/>
<dbReference type="RGD" id="61933">
    <property type="gene designation" value="Atp5mc1"/>
</dbReference>
<dbReference type="eggNOG" id="KOG3025">
    <property type="taxonomic scope" value="Eukaryota"/>
</dbReference>
<dbReference type="HOGENOM" id="CLU_116822_1_0_1"/>
<dbReference type="InParanoid" id="Q06645"/>
<dbReference type="OrthoDB" id="438052at2759"/>
<dbReference type="PhylomeDB" id="Q06645"/>
<dbReference type="TreeFam" id="TF300140"/>
<dbReference type="Reactome" id="R-RNO-163210">
    <property type="pathway name" value="Formation of ATP by chemiosmotic coupling"/>
</dbReference>
<dbReference type="Reactome" id="R-RNO-8949613">
    <property type="pathway name" value="Cristae formation"/>
</dbReference>
<dbReference type="PRO" id="PR:Q06645"/>
<dbReference type="Proteomes" id="UP000002494">
    <property type="component" value="Chromosome 10"/>
</dbReference>
<dbReference type="Bgee" id="ENSRNOG00000007235">
    <property type="expression patterns" value="Expressed in heart and 19 other cell types or tissues"/>
</dbReference>
<dbReference type="GO" id="GO:0034703">
    <property type="term" value="C:cation channel complex"/>
    <property type="evidence" value="ECO:0000314"/>
    <property type="project" value="RGD"/>
</dbReference>
<dbReference type="GO" id="GO:0150034">
    <property type="term" value="C:distal axon"/>
    <property type="evidence" value="ECO:0000314"/>
    <property type="project" value="RGD"/>
</dbReference>
<dbReference type="GO" id="GO:0031966">
    <property type="term" value="C:mitochondrial membrane"/>
    <property type="evidence" value="ECO:0007669"/>
    <property type="project" value="UniProtKB-SubCell"/>
</dbReference>
<dbReference type="GO" id="GO:0043025">
    <property type="term" value="C:neuronal cell body"/>
    <property type="evidence" value="ECO:0000314"/>
    <property type="project" value="RGD"/>
</dbReference>
<dbReference type="GO" id="GO:0045259">
    <property type="term" value="C:proton-transporting ATP synthase complex"/>
    <property type="evidence" value="ECO:0000314"/>
    <property type="project" value="UniProtKB"/>
</dbReference>
<dbReference type="GO" id="GO:0033177">
    <property type="term" value="C:proton-transporting two-sector ATPase complex, proton-transporting domain"/>
    <property type="evidence" value="ECO:0007669"/>
    <property type="project" value="InterPro"/>
</dbReference>
<dbReference type="GO" id="GO:0022834">
    <property type="term" value="F:ligand-gated channel activity"/>
    <property type="evidence" value="ECO:0000314"/>
    <property type="project" value="RGD"/>
</dbReference>
<dbReference type="GO" id="GO:0008289">
    <property type="term" value="F:lipid binding"/>
    <property type="evidence" value="ECO:0007669"/>
    <property type="project" value="UniProtKB-KW"/>
</dbReference>
<dbReference type="GO" id="GO:0015252">
    <property type="term" value="F:proton channel activity"/>
    <property type="evidence" value="ECO:0000250"/>
    <property type="project" value="UniProtKB"/>
</dbReference>
<dbReference type="GO" id="GO:1905232">
    <property type="term" value="P:cellular response to L-glutamate"/>
    <property type="evidence" value="ECO:0000315"/>
    <property type="project" value="RGD"/>
</dbReference>
<dbReference type="GO" id="GO:0009631">
    <property type="term" value="P:cold acclimation"/>
    <property type="evidence" value="ECO:0000270"/>
    <property type="project" value="RGD"/>
</dbReference>
<dbReference type="GO" id="GO:0010917">
    <property type="term" value="P:negative regulation of mitochondrial membrane potential"/>
    <property type="evidence" value="ECO:0000315"/>
    <property type="project" value="RGD"/>
</dbReference>
<dbReference type="GO" id="GO:1903427">
    <property type="term" value="P:negative regulation of reactive oxygen species biosynthetic process"/>
    <property type="evidence" value="ECO:0000315"/>
    <property type="project" value="RGD"/>
</dbReference>
<dbReference type="GO" id="GO:0046931">
    <property type="term" value="P:pore complex assembly"/>
    <property type="evidence" value="ECO:0000314"/>
    <property type="project" value="RGD"/>
</dbReference>
<dbReference type="GO" id="GO:0045773">
    <property type="term" value="P:positive regulation of axon extension"/>
    <property type="evidence" value="ECO:0000315"/>
    <property type="project" value="RGD"/>
</dbReference>
<dbReference type="GO" id="GO:0015986">
    <property type="term" value="P:proton motive force-driven ATP synthesis"/>
    <property type="evidence" value="ECO:0000250"/>
    <property type="project" value="UniProtKB"/>
</dbReference>
<dbReference type="GO" id="GO:1902600">
    <property type="term" value="P:proton transmembrane transport"/>
    <property type="evidence" value="ECO:0000250"/>
    <property type="project" value="UniProtKB"/>
</dbReference>
<dbReference type="GO" id="GO:1905242">
    <property type="term" value="P:response to 3,3',5-triiodo-L-thyronine"/>
    <property type="evidence" value="ECO:0000270"/>
    <property type="project" value="RGD"/>
</dbReference>
<dbReference type="GO" id="GO:0045471">
    <property type="term" value="P:response to ethanol"/>
    <property type="evidence" value="ECO:0000270"/>
    <property type="project" value="RGD"/>
</dbReference>
<dbReference type="CDD" id="cd18182">
    <property type="entry name" value="ATP-synt_Fo_c_ATP5G3"/>
    <property type="match status" value="1"/>
</dbReference>
<dbReference type="FunFam" id="1.20.20.10:FF:000003">
    <property type="entry name" value="Atp synthase f complex subunit mitochondrial"/>
    <property type="match status" value="1"/>
</dbReference>
<dbReference type="Gene3D" id="1.20.20.10">
    <property type="entry name" value="F1F0 ATP synthase subunit C"/>
    <property type="match status" value="1"/>
</dbReference>
<dbReference type="HAMAP" id="MF_01396">
    <property type="entry name" value="ATP_synth_c_bact"/>
    <property type="match status" value="1"/>
</dbReference>
<dbReference type="InterPro" id="IPR000454">
    <property type="entry name" value="ATP_synth_F0_csu"/>
</dbReference>
<dbReference type="InterPro" id="IPR020537">
    <property type="entry name" value="ATP_synth_F0_csu_DDCD_BS"/>
</dbReference>
<dbReference type="InterPro" id="IPR038662">
    <property type="entry name" value="ATP_synth_F0_csu_sf"/>
</dbReference>
<dbReference type="InterPro" id="IPR002379">
    <property type="entry name" value="ATPase_proteolipid_c-like_dom"/>
</dbReference>
<dbReference type="InterPro" id="IPR035921">
    <property type="entry name" value="F/V-ATP_Csub_sf"/>
</dbReference>
<dbReference type="PANTHER" id="PTHR10031:SF54">
    <property type="entry name" value="ATP SYNTHASE F(0) COMPLEX SUBUNIT C2, MITOCHONDRIAL"/>
    <property type="match status" value="1"/>
</dbReference>
<dbReference type="PANTHER" id="PTHR10031">
    <property type="entry name" value="ATP SYNTHASE LIPID-BINDING PROTEIN, MITOCHONDRIAL"/>
    <property type="match status" value="1"/>
</dbReference>
<dbReference type="Pfam" id="PF00137">
    <property type="entry name" value="ATP-synt_C"/>
    <property type="match status" value="1"/>
</dbReference>
<dbReference type="PRINTS" id="PR00124">
    <property type="entry name" value="ATPASEC"/>
</dbReference>
<dbReference type="SUPFAM" id="SSF81333">
    <property type="entry name" value="F1F0 ATP synthase subunit C"/>
    <property type="match status" value="1"/>
</dbReference>
<dbReference type="PROSITE" id="PS00605">
    <property type="entry name" value="ATPASE_C"/>
    <property type="match status" value="1"/>
</dbReference>
<proteinExistence type="evidence at protein level"/>
<reference key="1">
    <citation type="journal article" date="1993" name="Biochim. Biophys. Acta">
        <title>Molecular cloning and sequence of cDNAs for the import precursors of oligomycin sensitivity conferring protein, ATPase inhibitor protein, and subunit c of H(+)-ATP synthase in rat mitochondria.</title>
        <authorList>
            <person name="Higuti T."/>
            <person name="Kuroiwa K."/>
            <person name="Kawamura Y."/>
            <person name="Morimoto K."/>
            <person name="Tsujita H."/>
        </authorList>
    </citation>
    <scope>NUCLEOTIDE SEQUENCE [MRNA]</scope>
</reference>
<reference key="2">
    <citation type="journal article" date="2007" name="Mol. Cell. Proteomics">
        <title>Identification of two proteins associated with mammalian ATP synthase.</title>
        <authorList>
            <person name="Meyer B."/>
            <person name="Wittig I."/>
            <person name="Trifilieff E."/>
            <person name="Karas M."/>
            <person name="Schaegger H."/>
        </authorList>
    </citation>
    <scope>IDENTIFICATION BY MASS SPECTROMETRY</scope>
    <scope>IDENTIFICATION IN THE ATP SYNTHASE COMPLEX</scope>
</reference>
<reference key="3">
    <citation type="journal article" date="2019" name="J. Biol. Chem.">
        <title>Lysine methylation by the mitochondrial methyltransferase FAM173B optimizes the function of mitochondrial ATP synthase.</title>
        <authorList>
            <person name="Malecki J.M."/>
            <person name="Willemen H.L.D.M."/>
            <person name="Pinto R."/>
            <person name="Ho A.Y.Y."/>
            <person name="Moen A."/>
            <person name="Kjoenstad I.F."/>
            <person name="Burgering B.M.T."/>
            <person name="Zwartkruis F."/>
            <person name="Eijkelkamp N."/>
            <person name="Falnes P.O."/>
        </authorList>
    </citation>
    <scope>METHYLATION AT LYS-104</scope>
</reference>
<sequence length="136" mass="14244">MQTTKALLISPVLIRSCTRGLIRPVSASLLSRPEAPSKKPSCCSSPLQVARREFQTSVISRDIDTAAKFIGAGAATVGVAGSGAGIGTVFGSLIIGYARNPSLKQQLFSYAILGFALSEAMGLFCLMVAFLILFAM</sequence>
<name>AT5G1_RAT</name>
<feature type="transit peptide" description="Mitochondrion">
    <location>
        <begin position="1"/>
        <end position="61"/>
    </location>
</feature>
<feature type="chain" id="PRO_0000002559" description="ATP synthase F(0) complex subunit C1, mitochondrial">
    <location>
        <begin position="62"/>
        <end position="136"/>
    </location>
</feature>
<feature type="transmembrane region" description="Helical" evidence="3">
    <location>
        <begin position="77"/>
        <end position="97"/>
    </location>
</feature>
<feature type="transmembrane region" description="Helical" evidence="3">
    <location>
        <begin position="112"/>
        <end position="132"/>
    </location>
</feature>
<feature type="site" description="Reversibly protonated during proton transport" evidence="1">
    <location>
        <position position="119"/>
    </location>
</feature>
<feature type="modified residue" description="N6,N6,N6-trimethyllysine" evidence="5">
    <location>
        <position position="104"/>
    </location>
</feature>
<keyword id="KW-0138">CF(0)</keyword>
<keyword id="KW-0375">Hydrogen ion transport</keyword>
<keyword id="KW-0406">Ion transport</keyword>
<keyword id="KW-0446">Lipid-binding</keyword>
<keyword id="KW-0472">Membrane</keyword>
<keyword id="KW-0488">Methylation</keyword>
<keyword id="KW-0496">Mitochondrion</keyword>
<keyword id="KW-1185">Reference proteome</keyword>
<keyword id="KW-0809">Transit peptide</keyword>
<keyword id="KW-0812">Transmembrane</keyword>
<keyword id="KW-1133">Transmembrane helix</keyword>
<keyword id="KW-0813">Transport</keyword>
<organism>
    <name type="scientific">Rattus norvegicus</name>
    <name type="common">Rat</name>
    <dbReference type="NCBI Taxonomy" id="10116"/>
    <lineage>
        <taxon>Eukaryota</taxon>
        <taxon>Metazoa</taxon>
        <taxon>Chordata</taxon>
        <taxon>Craniata</taxon>
        <taxon>Vertebrata</taxon>
        <taxon>Euteleostomi</taxon>
        <taxon>Mammalia</taxon>
        <taxon>Eutheria</taxon>
        <taxon>Euarchontoglires</taxon>
        <taxon>Glires</taxon>
        <taxon>Rodentia</taxon>
        <taxon>Myomorpha</taxon>
        <taxon>Muroidea</taxon>
        <taxon>Muridae</taxon>
        <taxon>Murinae</taxon>
        <taxon>Rattus</taxon>
    </lineage>
</organism>
<protein>
    <recommendedName>
        <fullName evidence="6">ATP synthase F(0) complex subunit C1, mitochondrial</fullName>
    </recommendedName>
    <alternativeName>
        <fullName>ATP synthase lipid-binding protein</fullName>
    </alternativeName>
    <alternativeName>
        <fullName evidence="7">ATP synthase membrane subunit c locus 1</fullName>
    </alternativeName>
    <alternativeName>
        <fullName>ATP synthase proteolipid P1</fullName>
    </alternativeName>
    <alternativeName>
        <fullName>ATPase protein 9</fullName>
    </alternativeName>
    <alternativeName>
        <fullName>ATPase subunit c</fullName>
    </alternativeName>
    <alternativeName>
        <fullName evidence="2">Proton-conducting channel, ATP synthase F(0) complex subunit c</fullName>
    </alternativeName>
</protein>
<comment type="function">
    <text evidence="2">Subunit c, of the mitochondrial membrane ATP synthase complex (F(1)F(0) ATP synthase or Complex V) that produces ATP from ADP in the presence of a proton gradient across the membrane which is generated by electron transport complexes of the respiratory chain. ATP synthase complex consist of a soluble F(1) head domain - the catalytic core - and a membrane F(1) domain - the membrane proton channel. These two domains are linked by a central stalk rotating inside the F(1) region and a stationary peripheral stalk. During catalysis, ATP synthesis in the catalytic domain of F(1) is coupled via a rotary mechanism of the central stalk subunits to proton translocation. With the subunit a (MT-ATP6), forms the proton-conducting channel in the F(0) domain, that contains two crucial half-channels (inlet and outlet) that facilitate proton movement from the mitochondrial intermembrane space (IMS) into the matrix. Protons are taken up via the inlet half-channel and released through the outlet half-channel, following a Grotthuss mechanism.</text>
</comment>
<comment type="catalytic activity">
    <reaction evidence="2">
        <text>H(+)(in) = H(+)(out)</text>
        <dbReference type="Rhea" id="RHEA:34979"/>
        <dbReference type="ChEBI" id="CHEBI:15378"/>
    </reaction>
</comment>
<comment type="subunit">
    <text evidence="2 4">Homooctamer; the c-ring consists of eight c subunits forming a circle, and each subunit adopts a hairpin shape. Component of the ATP synthase complex composed at least of ATP5F1A/subunit alpha, ATP5F1B/subunit beta, ATP5MC1/subunit c (homooctomer), MT-ATP6/subunit a, MT-ATP8/subunit 8, ATP5ME/subunit e, ATP5MF/subunit f, ATP5MG/subunit g, ATP5MK/subunit k, ATP5MJ/subunit j, ATP5F1C/subunit gamma, ATP5F1D/subunit delta, ATP5F1E/subunit epsilon, ATP5PF/subunit F6, ATP5PB/subunit b, ATP5PD/subunit d, ATP5PO/subunit OSCP (PubMed:17575325). ATP synthase complex consists of a soluble F(1) head domain (subunits alpha(3) and beta(3)) - the catalytic core - and a membrane F(0) domain - the membrane proton channel (subunits c, a, 8, e, f, g, k and j). These two domains are linked by a central stalk (subunits gamma, delta, and epsilon) rotating inside the F1 region and a stationary peripheral stalk (subunits F6, b, d, and OSCP). Interacts with TMEM70 (homooligomer form); this interaction facilitates the oligomer formation of subunit c/ATP5MC1 (c-ring) and the c-ring membrane insertion and also protects ATP5MC1 against intramitochondrial proteolysis (By similarity).</text>
</comment>
<comment type="subcellular location">
    <subcellularLocation>
        <location>Mitochondrion membrane</location>
        <topology>Multi-pass membrane protein</topology>
    </subcellularLocation>
</comment>
<comment type="PTM">
    <text evidence="5">Trimethylated by ATPSCKMT at Lys-104. Methylation is required for proper incorporation of the C subunit into the ATP synthase complex and mitochondrial respiration.</text>
</comment>
<comment type="disease">
    <text>This protein is the major protein stored in the storage bodies of animals or humans affected with ceroid lipofuscinosis (Batten disease).</text>
</comment>
<comment type="miscellaneous">
    <text>There are three genes which encode the mitochondrial ATP synthase proteolipid and they specify precursors with different import sequences. They are expressed in a tissue-specific manner.</text>
</comment>
<comment type="similarity">
    <text evidence="6">Belongs to the ATPase C chain family.</text>
</comment>
<gene>
    <name evidence="7" type="primary">Atp5mc1</name>
    <name type="synonym">Atp5g1</name>
</gene>